<proteinExistence type="inferred from homology"/>
<feature type="chain" id="PRO_0000091725" description="3-hydroxyacyl-[acyl-carrier-protein] dehydratase FabZ">
    <location>
        <begin position="1"/>
        <end position="151"/>
    </location>
</feature>
<feature type="active site" evidence="1">
    <location>
        <position position="54"/>
    </location>
</feature>
<evidence type="ECO:0000250" key="1"/>
<evidence type="ECO:0000305" key="2"/>
<accession>P0A1I0</accession>
<accession>P21773</accession>
<dbReference type="EC" id="4.2.1.59"/>
<dbReference type="EMBL" id="AL513382">
    <property type="protein sequence ID" value="CAD08685.1"/>
    <property type="molecule type" value="Genomic_DNA"/>
</dbReference>
<dbReference type="EMBL" id="AE014613">
    <property type="protein sequence ID" value="AAO67958.1"/>
    <property type="molecule type" value="Genomic_DNA"/>
</dbReference>
<dbReference type="RefSeq" id="NP_454834.1">
    <property type="nucleotide sequence ID" value="NC_003198.1"/>
</dbReference>
<dbReference type="RefSeq" id="WP_000210741.1">
    <property type="nucleotide sequence ID" value="NZ_WSUR01000009.1"/>
</dbReference>
<dbReference type="SMR" id="P0A1I0"/>
<dbReference type="STRING" id="220341.gene:17584283"/>
<dbReference type="GeneID" id="66754751"/>
<dbReference type="KEGG" id="stt:t0228"/>
<dbReference type="KEGG" id="sty:STY0250"/>
<dbReference type="PATRIC" id="fig|220341.7.peg.250"/>
<dbReference type="eggNOG" id="COG0764">
    <property type="taxonomic scope" value="Bacteria"/>
</dbReference>
<dbReference type="HOGENOM" id="CLU_078912_1_0_6"/>
<dbReference type="OMA" id="FPGRPLM"/>
<dbReference type="OrthoDB" id="9772788at2"/>
<dbReference type="Proteomes" id="UP000000541">
    <property type="component" value="Chromosome"/>
</dbReference>
<dbReference type="Proteomes" id="UP000002670">
    <property type="component" value="Chromosome"/>
</dbReference>
<dbReference type="GO" id="GO:0005737">
    <property type="term" value="C:cytoplasm"/>
    <property type="evidence" value="ECO:0007669"/>
    <property type="project" value="UniProtKB-SubCell"/>
</dbReference>
<dbReference type="GO" id="GO:0016020">
    <property type="term" value="C:membrane"/>
    <property type="evidence" value="ECO:0007669"/>
    <property type="project" value="GOC"/>
</dbReference>
<dbReference type="GO" id="GO:0019171">
    <property type="term" value="F:(3R)-hydroxyacyl-[acyl-carrier-protein] dehydratase activity"/>
    <property type="evidence" value="ECO:0007669"/>
    <property type="project" value="UniProtKB-EC"/>
</dbReference>
<dbReference type="GO" id="GO:0006633">
    <property type="term" value="P:fatty acid biosynthetic process"/>
    <property type="evidence" value="ECO:0007669"/>
    <property type="project" value="UniProtKB-UniRule"/>
</dbReference>
<dbReference type="GO" id="GO:0009245">
    <property type="term" value="P:lipid A biosynthetic process"/>
    <property type="evidence" value="ECO:0007669"/>
    <property type="project" value="UniProtKB-UniRule"/>
</dbReference>
<dbReference type="CDD" id="cd01288">
    <property type="entry name" value="FabZ"/>
    <property type="match status" value="1"/>
</dbReference>
<dbReference type="FunFam" id="3.10.129.10:FF:000001">
    <property type="entry name" value="3-hydroxyacyl-[acyl-carrier-protein] dehydratase FabZ"/>
    <property type="match status" value="1"/>
</dbReference>
<dbReference type="Gene3D" id="3.10.129.10">
    <property type="entry name" value="Hotdog Thioesterase"/>
    <property type="match status" value="1"/>
</dbReference>
<dbReference type="HAMAP" id="MF_00406">
    <property type="entry name" value="FabZ"/>
    <property type="match status" value="1"/>
</dbReference>
<dbReference type="InterPro" id="IPR013114">
    <property type="entry name" value="FabA_FabZ"/>
</dbReference>
<dbReference type="InterPro" id="IPR010084">
    <property type="entry name" value="FabZ"/>
</dbReference>
<dbReference type="InterPro" id="IPR029069">
    <property type="entry name" value="HotDog_dom_sf"/>
</dbReference>
<dbReference type="NCBIfam" id="TIGR01750">
    <property type="entry name" value="fabZ"/>
    <property type="match status" value="1"/>
</dbReference>
<dbReference type="NCBIfam" id="NF000582">
    <property type="entry name" value="PRK00006.1"/>
    <property type="match status" value="1"/>
</dbReference>
<dbReference type="PANTHER" id="PTHR30272">
    <property type="entry name" value="3-HYDROXYACYL-[ACYL-CARRIER-PROTEIN] DEHYDRATASE"/>
    <property type="match status" value="1"/>
</dbReference>
<dbReference type="PANTHER" id="PTHR30272:SF1">
    <property type="entry name" value="3-HYDROXYACYL-[ACYL-CARRIER-PROTEIN] DEHYDRATASE"/>
    <property type="match status" value="1"/>
</dbReference>
<dbReference type="Pfam" id="PF07977">
    <property type="entry name" value="FabA"/>
    <property type="match status" value="1"/>
</dbReference>
<dbReference type="SUPFAM" id="SSF54637">
    <property type="entry name" value="Thioesterase/thiol ester dehydrase-isomerase"/>
    <property type="match status" value="1"/>
</dbReference>
<name>FABZ_SALTI</name>
<reference key="1">
    <citation type="journal article" date="2001" name="Nature">
        <title>Complete genome sequence of a multiple drug resistant Salmonella enterica serovar Typhi CT18.</title>
        <authorList>
            <person name="Parkhill J."/>
            <person name="Dougan G."/>
            <person name="James K.D."/>
            <person name="Thomson N.R."/>
            <person name="Pickard D."/>
            <person name="Wain J."/>
            <person name="Churcher C.M."/>
            <person name="Mungall K.L."/>
            <person name="Bentley S.D."/>
            <person name="Holden M.T.G."/>
            <person name="Sebaihia M."/>
            <person name="Baker S."/>
            <person name="Basham D."/>
            <person name="Brooks K."/>
            <person name="Chillingworth T."/>
            <person name="Connerton P."/>
            <person name="Cronin A."/>
            <person name="Davis P."/>
            <person name="Davies R.M."/>
            <person name="Dowd L."/>
            <person name="White N."/>
            <person name="Farrar J."/>
            <person name="Feltwell T."/>
            <person name="Hamlin N."/>
            <person name="Haque A."/>
            <person name="Hien T.T."/>
            <person name="Holroyd S."/>
            <person name="Jagels K."/>
            <person name="Krogh A."/>
            <person name="Larsen T.S."/>
            <person name="Leather S."/>
            <person name="Moule S."/>
            <person name="O'Gaora P."/>
            <person name="Parry C."/>
            <person name="Quail M.A."/>
            <person name="Rutherford K.M."/>
            <person name="Simmonds M."/>
            <person name="Skelton J."/>
            <person name="Stevens K."/>
            <person name="Whitehead S."/>
            <person name="Barrell B.G."/>
        </authorList>
    </citation>
    <scope>NUCLEOTIDE SEQUENCE [LARGE SCALE GENOMIC DNA]</scope>
    <source>
        <strain>CT18</strain>
    </source>
</reference>
<reference key="2">
    <citation type="journal article" date="2003" name="J. Bacteriol.">
        <title>Comparative genomics of Salmonella enterica serovar Typhi strains Ty2 and CT18.</title>
        <authorList>
            <person name="Deng W."/>
            <person name="Liou S.-R."/>
            <person name="Plunkett G. III"/>
            <person name="Mayhew G.F."/>
            <person name="Rose D.J."/>
            <person name="Burland V."/>
            <person name="Kodoyianni V."/>
            <person name="Schwartz D.C."/>
            <person name="Blattner F.R."/>
        </authorList>
    </citation>
    <scope>NUCLEOTIDE SEQUENCE [LARGE SCALE GENOMIC DNA]</scope>
    <source>
        <strain>ATCC 700931 / Ty2</strain>
    </source>
</reference>
<protein>
    <recommendedName>
        <fullName>3-hydroxyacyl-[acyl-carrier-protein] dehydratase FabZ</fullName>
        <ecNumber>4.2.1.59</ecNumber>
    </recommendedName>
    <alternativeName>
        <fullName>(3R)-hydroxymyristoyl-[acyl-carrier-protein] dehydratase</fullName>
        <shortName>(3R)-hydroxymyristoyl-ACP dehydrase</shortName>
    </alternativeName>
    <alternativeName>
        <fullName>Beta-hydroxyacyl-ACP dehydratase</fullName>
    </alternativeName>
</protein>
<keyword id="KW-0963">Cytoplasm</keyword>
<keyword id="KW-0441">Lipid A biosynthesis</keyword>
<keyword id="KW-0444">Lipid biosynthesis</keyword>
<keyword id="KW-0443">Lipid metabolism</keyword>
<keyword id="KW-0456">Lyase</keyword>
<sequence length="151" mass="16999">MTTNTHTLQIEEILELLPHRFPFLLVDRVLDFEEGRFLRAVKNVSVNEPFFQGHFPGKPILPGVLILEAMAQATGILAFKSVGKLEPGELYYFAGIDEARFKRPVVPGDQMIMEVTFEKTRRGLTRFKGVALVDGKVVCEATMMCARSREA</sequence>
<gene>
    <name type="primary">fabZ</name>
    <name type="ordered locus">STY0250</name>
    <name type="ordered locus">t0228</name>
</gene>
<comment type="function">
    <text evidence="1">Involved in unsaturated fatty acids biosynthesis. Catalyzes the dehydration of short chain beta-hydroxyacyl-ACPs and long chain saturated and unsaturated beta-hydroxyacyl-ACPs (By similarity).</text>
</comment>
<comment type="catalytic activity">
    <reaction>
        <text>a (3R)-hydroxyacyl-[ACP] = a (2E)-enoyl-[ACP] + H2O</text>
        <dbReference type="Rhea" id="RHEA:13097"/>
        <dbReference type="Rhea" id="RHEA-COMP:9925"/>
        <dbReference type="Rhea" id="RHEA-COMP:9945"/>
        <dbReference type="ChEBI" id="CHEBI:15377"/>
        <dbReference type="ChEBI" id="CHEBI:78784"/>
        <dbReference type="ChEBI" id="CHEBI:78827"/>
        <dbReference type="EC" id="4.2.1.59"/>
    </reaction>
</comment>
<comment type="subcellular location">
    <subcellularLocation>
        <location evidence="1">Cytoplasm</location>
    </subcellularLocation>
</comment>
<comment type="similarity">
    <text evidence="2">Belongs to the thioester dehydratase family. FabZ subfamily.</text>
</comment>
<organism>
    <name type="scientific">Salmonella typhi</name>
    <dbReference type="NCBI Taxonomy" id="90370"/>
    <lineage>
        <taxon>Bacteria</taxon>
        <taxon>Pseudomonadati</taxon>
        <taxon>Pseudomonadota</taxon>
        <taxon>Gammaproteobacteria</taxon>
        <taxon>Enterobacterales</taxon>
        <taxon>Enterobacteriaceae</taxon>
        <taxon>Salmonella</taxon>
    </lineage>
</organism>